<keyword id="KW-1015">Disulfide bond</keyword>
<keyword id="KW-0396">Initiation factor</keyword>
<keyword id="KW-0648">Protein biosynthesis</keyword>
<keyword id="KW-1185">Reference proteome</keyword>
<keyword id="KW-0694">RNA-binding</keyword>
<keyword id="KW-0810">Translation regulation</keyword>
<dbReference type="EMBL" id="U34598">
    <property type="protein sequence ID" value="AAB40349.1"/>
    <property type="molecule type" value="mRNA"/>
</dbReference>
<dbReference type="EMBL" id="AC022457">
    <property type="protein sequence ID" value="AAK27811.1"/>
    <property type="molecule type" value="Genomic_DNA"/>
</dbReference>
<dbReference type="EMBL" id="DP000086">
    <property type="protein sequence ID" value="AAP54201.1"/>
    <property type="molecule type" value="Genomic_DNA"/>
</dbReference>
<dbReference type="EMBL" id="AP008216">
    <property type="protein sequence ID" value="BAF26724.1"/>
    <property type="molecule type" value="Genomic_DNA"/>
</dbReference>
<dbReference type="EMBL" id="AP014966">
    <property type="protein sequence ID" value="BAT11224.1"/>
    <property type="molecule type" value="Genomic_DNA"/>
</dbReference>
<dbReference type="EMBL" id="CM000147">
    <property type="protein sequence ID" value="EEE51107.1"/>
    <property type="molecule type" value="Genomic_DNA"/>
</dbReference>
<dbReference type="EMBL" id="AK242605">
    <property type="protein sequence ID" value="BAH01309.1"/>
    <property type="molecule type" value="mRNA"/>
</dbReference>
<dbReference type="PIR" id="JC5331">
    <property type="entry name" value="JC5331"/>
</dbReference>
<dbReference type="RefSeq" id="XP_015615056.1">
    <property type="nucleotide sequence ID" value="XM_015759570.1"/>
</dbReference>
<dbReference type="SMR" id="P48600"/>
<dbReference type="FunCoup" id="P48600">
    <property type="interactions" value="2989"/>
</dbReference>
<dbReference type="STRING" id="39947.P48600"/>
<dbReference type="PaxDb" id="39947-P48600"/>
<dbReference type="EnsemblPlants" id="Os10t0467600-01">
    <property type="protein sequence ID" value="Os10t0467600-01"/>
    <property type="gene ID" value="Os10g0467600"/>
</dbReference>
<dbReference type="Gramene" id="Os10t0467600-01">
    <property type="protein sequence ID" value="Os10t0467600-01"/>
    <property type="gene ID" value="Os10g0467600"/>
</dbReference>
<dbReference type="KEGG" id="dosa:Os10g0467600"/>
<dbReference type="eggNOG" id="KOG1670">
    <property type="taxonomic scope" value="Eukaryota"/>
</dbReference>
<dbReference type="HOGENOM" id="CLU_043552_2_1_1"/>
<dbReference type="InParanoid" id="P48600"/>
<dbReference type="OMA" id="EEFWAIV"/>
<dbReference type="OrthoDB" id="590761at2759"/>
<dbReference type="Proteomes" id="UP000000763">
    <property type="component" value="Chromosome 10"/>
</dbReference>
<dbReference type="Proteomes" id="UP000007752">
    <property type="component" value="Chromosome 10"/>
</dbReference>
<dbReference type="Proteomes" id="UP000059680">
    <property type="component" value="Chromosome 10"/>
</dbReference>
<dbReference type="GO" id="GO:0016281">
    <property type="term" value="C:eukaryotic translation initiation factor 4F complex"/>
    <property type="evidence" value="ECO:0000318"/>
    <property type="project" value="GO_Central"/>
</dbReference>
<dbReference type="GO" id="GO:0000340">
    <property type="term" value="F:RNA 7-methylguanosine cap binding"/>
    <property type="evidence" value="ECO:0000318"/>
    <property type="project" value="GO_Central"/>
</dbReference>
<dbReference type="GO" id="GO:0003743">
    <property type="term" value="F:translation initiation factor activity"/>
    <property type="evidence" value="ECO:0000318"/>
    <property type="project" value="GO_Central"/>
</dbReference>
<dbReference type="GO" id="GO:0050687">
    <property type="term" value="P:negative regulation of defense response to virus"/>
    <property type="evidence" value="ECO:0007669"/>
    <property type="project" value="EnsemblPlants"/>
</dbReference>
<dbReference type="GO" id="GO:0006417">
    <property type="term" value="P:regulation of translation"/>
    <property type="evidence" value="ECO:0007669"/>
    <property type="project" value="UniProtKB-KW"/>
</dbReference>
<dbReference type="GO" id="GO:0009615">
    <property type="term" value="P:response to virus"/>
    <property type="evidence" value="ECO:0007669"/>
    <property type="project" value="EnsemblPlants"/>
</dbReference>
<dbReference type="GO" id="GO:0006413">
    <property type="term" value="P:translational initiation"/>
    <property type="evidence" value="ECO:0000318"/>
    <property type="project" value="GO_Central"/>
</dbReference>
<dbReference type="FunFam" id="3.30.760.10:FF:000003">
    <property type="entry name" value="Eukaryotic translation initiation factor 4E"/>
    <property type="match status" value="1"/>
</dbReference>
<dbReference type="Gene3D" id="3.30.760.10">
    <property type="entry name" value="RNA Cap, Translation Initiation Factor Eif4e"/>
    <property type="match status" value="1"/>
</dbReference>
<dbReference type="InterPro" id="IPR023398">
    <property type="entry name" value="TIF_eIF4e-like"/>
</dbReference>
<dbReference type="InterPro" id="IPR001040">
    <property type="entry name" value="TIF_eIF_4E"/>
</dbReference>
<dbReference type="InterPro" id="IPR019770">
    <property type="entry name" value="TIF_eIF_4E_CS"/>
</dbReference>
<dbReference type="PANTHER" id="PTHR11960">
    <property type="entry name" value="EUKARYOTIC TRANSLATION INITIATION FACTOR 4E RELATED"/>
    <property type="match status" value="1"/>
</dbReference>
<dbReference type="PANTHER" id="PTHR11960:SF60">
    <property type="entry name" value="EUKARYOTIC TRANSLATION INITIATION FACTOR ISOFORM 4E-2"/>
    <property type="match status" value="1"/>
</dbReference>
<dbReference type="Pfam" id="PF01652">
    <property type="entry name" value="IF4E"/>
    <property type="match status" value="1"/>
</dbReference>
<dbReference type="SUPFAM" id="SSF55418">
    <property type="entry name" value="eIF4e-like"/>
    <property type="match status" value="1"/>
</dbReference>
<dbReference type="PROSITE" id="PS00813">
    <property type="entry name" value="IF4E"/>
    <property type="match status" value="1"/>
</dbReference>
<feature type="chain" id="PRO_0000193661" description="Eukaryotic translation initiation factor isoform 4E-2">
    <location>
        <begin position="1"/>
        <end position="206"/>
    </location>
</feature>
<feature type="disulfide bond" evidence="1">
    <location>
        <begin position="103"/>
        <end position="142"/>
    </location>
</feature>
<feature type="sequence conflict" description="In Ref. 1; AAB40349." evidence="2" ref="1">
    <original>A</original>
    <variation>V</variation>
    <location>
        <position position="92"/>
    </location>
</feature>
<proteinExistence type="evidence at transcript level"/>
<name>IF4E2_ORYSJ</name>
<gene>
    <name type="ordered locus">Os10g0467600</name>
    <name type="ordered locus">LOC_Os10g32970</name>
    <name evidence="3" type="ORF">OsJ_31838</name>
    <name type="ORF">OSJNBa0006L06.9</name>
</gene>
<reference key="1">
    <citation type="journal article" date="1996" name="Gene">
        <title>Sequences of two expressed sequence tags (EST) from rice encoding different cap-binding proteins.</title>
        <authorList>
            <person name="Aliyeva E."/>
            <person name="Metz A.M."/>
            <person name="Browning K.S."/>
        </authorList>
    </citation>
    <scope>NUCLEOTIDE SEQUENCE [MRNA]</scope>
    <source>
        <strain>cv. Nipponbare</strain>
        <tissue>Root</tissue>
    </source>
</reference>
<reference key="2">
    <citation type="journal article" date="2003" name="Science">
        <title>In-depth view of structure, activity, and evolution of rice chromosome 10.</title>
        <authorList>
            <person name="Yu Y."/>
            <person name="Rambo T."/>
            <person name="Currie J."/>
            <person name="Saski C."/>
            <person name="Kim H.-R."/>
            <person name="Collura K."/>
            <person name="Thompson S."/>
            <person name="Simmons J."/>
            <person name="Yang T.-J."/>
            <person name="Nah G."/>
            <person name="Patel A.J."/>
            <person name="Thurmond S."/>
            <person name="Henry D."/>
            <person name="Oates R."/>
            <person name="Palmer M."/>
            <person name="Pries G."/>
            <person name="Gibson J."/>
            <person name="Anderson H."/>
            <person name="Paradkar M."/>
            <person name="Crane L."/>
            <person name="Dale J."/>
            <person name="Carver M.B."/>
            <person name="Wood T."/>
            <person name="Frisch D."/>
            <person name="Engler F."/>
            <person name="Soderlund C."/>
            <person name="Palmer L.E."/>
            <person name="Teytelman L."/>
            <person name="Nascimento L."/>
            <person name="De la Bastide M."/>
            <person name="Spiegel L."/>
            <person name="Ware D."/>
            <person name="O'Shaughnessy A."/>
            <person name="Dike S."/>
            <person name="Dedhia N."/>
            <person name="Preston R."/>
            <person name="Huang E."/>
            <person name="Ferraro K."/>
            <person name="Kuit K."/>
            <person name="Miller B."/>
            <person name="Zutavern T."/>
            <person name="Katzenberger F."/>
            <person name="Muller S."/>
            <person name="Balija V."/>
            <person name="Martienssen R.A."/>
            <person name="Stein L."/>
            <person name="Minx P."/>
            <person name="Johnson D."/>
            <person name="Cordum H."/>
            <person name="Mardis E."/>
            <person name="Cheng Z."/>
            <person name="Jiang J."/>
            <person name="Wilson R."/>
            <person name="McCombie W.R."/>
            <person name="Wing R.A."/>
            <person name="Yuan Q."/>
            <person name="Ouyang S."/>
            <person name="Liu J."/>
            <person name="Jones K.M."/>
            <person name="Gansberger K."/>
            <person name="Moffat K."/>
            <person name="Hill J."/>
            <person name="Tsitrin T."/>
            <person name="Overton L."/>
            <person name="Bera J."/>
            <person name="Kim M."/>
            <person name="Jin S."/>
            <person name="Tallon L."/>
            <person name="Ciecko A."/>
            <person name="Pai G."/>
            <person name="Van Aken S."/>
            <person name="Utterback T."/>
            <person name="Reidmuller S."/>
            <person name="Bormann J."/>
            <person name="Feldblyum T."/>
            <person name="Hsiao J."/>
            <person name="Zismann V."/>
            <person name="Blunt S."/>
            <person name="de Vazeille A.R."/>
            <person name="Shaffer T."/>
            <person name="Koo H."/>
            <person name="Suh B."/>
            <person name="Yang Q."/>
            <person name="Haas B."/>
            <person name="Peterson J."/>
            <person name="Pertea M."/>
            <person name="Volfovsky N."/>
            <person name="Wortman J."/>
            <person name="White O."/>
            <person name="Salzberg S.L."/>
            <person name="Fraser C.M."/>
            <person name="Buell C.R."/>
            <person name="Messing J."/>
            <person name="Song R."/>
            <person name="Fuks G."/>
            <person name="Llaca V."/>
            <person name="Kovchak S."/>
            <person name="Young S."/>
            <person name="Bowers J.E."/>
            <person name="Paterson A.H."/>
            <person name="Johns M.A."/>
            <person name="Mao L."/>
            <person name="Pan H."/>
            <person name="Dean R.A."/>
        </authorList>
    </citation>
    <scope>NUCLEOTIDE SEQUENCE [LARGE SCALE GENOMIC DNA]</scope>
    <source>
        <strain>cv. Nipponbare</strain>
    </source>
</reference>
<reference key="3">
    <citation type="journal article" date="2005" name="Nature">
        <title>The map-based sequence of the rice genome.</title>
        <authorList>
            <consortium name="International rice genome sequencing project (IRGSP)"/>
        </authorList>
    </citation>
    <scope>NUCLEOTIDE SEQUENCE [LARGE SCALE GENOMIC DNA]</scope>
    <source>
        <strain>cv. Nipponbare</strain>
    </source>
</reference>
<reference key="4">
    <citation type="journal article" date="2008" name="Nucleic Acids Res.">
        <title>The rice annotation project database (RAP-DB): 2008 update.</title>
        <authorList>
            <consortium name="The rice annotation project (RAP)"/>
        </authorList>
    </citation>
    <scope>GENOME REANNOTATION</scope>
    <source>
        <strain>cv. Nipponbare</strain>
    </source>
</reference>
<reference key="5">
    <citation type="journal article" date="2013" name="Rice">
        <title>Improvement of the Oryza sativa Nipponbare reference genome using next generation sequence and optical map data.</title>
        <authorList>
            <person name="Kawahara Y."/>
            <person name="de la Bastide M."/>
            <person name="Hamilton J.P."/>
            <person name="Kanamori H."/>
            <person name="McCombie W.R."/>
            <person name="Ouyang S."/>
            <person name="Schwartz D.C."/>
            <person name="Tanaka T."/>
            <person name="Wu J."/>
            <person name="Zhou S."/>
            <person name="Childs K.L."/>
            <person name="Davidson R.M."/>
            <person name="Lin H."/>
            <person name="Quesada-Ocampo L."/>
            <person name="Vaillancourt B."/>
            <person name="Sakai H."/>
            <person name="Lee S.S."/>
            <person name="Kim J."/>
            <person name="Numa H."/>
            <person name="Itoh T."/>
            <person name="Buell C.R."/>
            <person name="Matsumoto T."/>
        </authorList>
    </citation>
    <scope>GENOME REANNOTATION</scope>
    <source>
        <strain>cv. Nipponbare</strain>
    </source>
</reference>
<reference key="6">
    <citation type="journal article" date="2005" name="PLoS Biol.">
        <title>The genomes of Oryza sativa: a history of duplications.</title>
        <authorList>
            <person name="Yu J."/>
            <person name="Wang J."/>
            <person name="Lin W."/>
            <person name="Li S."/>
            <person name="Li H."/>
            <person name="Zhou J."/>
            <person name="Ni P."/>
            <person name="Dong W."/>
            <person name="Hu S."/>
            <person name="Zeng C."/>
            <person name="Zhang J."/>
            <person name="Zhang Y."/>
            <person name="Li R."/>
            <person name="Xu Z."/>
            <person name="Li S."/>
            <person name="Li X."/>
            <person name="Zheng H."/>
            <person name="Cong L."/>
            <person name="Lin L."/>
            <person name="Yin J."/>
            <person name="Geng J."/>
            <person name="Li G."/>
            <person name="Shi J."/>
            <person name="Liu J."/>
            <person name="Lv H."/>
            <person name="Li J."/>
            <person name="Wang J."/>
            <person name="Deng Y."/>
            <person name="Ran L."/>
            <person name="Shi X."/>
            <person name="Wang X."/>
            <person name="Wu Q."/>
            <person name="Li C."/>
            <person name="Ren X."/>
            <person name="Wang J."/>
            <person name="Wang X."/>
            <person name="Li D."/>
            <person name="Liu D."/>
            <person name="Zhang X."/>
            <person name="Ji Z."/>
            <person name="Zhao W."/>
            <person name="Sun Y."/>
            <person name="Zhang Z."/>
            <person name="Bao J."/>
            <person name="Han Y."/>
            <person name="Dong L."/>
            <person name="Ji J."/>
            <person name="Chen P."/>
            <person name="Wu S."/>
            <person name="Liu J."/>
            <person name="Xiao Y."/>
            <person name="Bu D."/>
            <person name="Tan J."/>
            <person name="Yang L."/>
            <person name="Ye C."/>
            <person name="Zhang J."/>
            <person name="Xu J."/>
            <person name="Zhou Y."/>
            <person name="Yu Y."/>
            <person name="Zhang B."/>
            <person name="Zhuang S."/>
            <person name="Wei H."/>
            <person name="Liu B."/>
            <person name="Lei M."/>
            <person name="Yu H."/>
            <person name="Li Y."/>
            <person name="Xu H."/>
            <person name="Wei S."/>
            <person name="He X."/>
            <person name="Fang L."/>
            <person name="Zhang Z."/>
            <person name="Zhang Y."/>
            <person name="Huang X."/>
            <person name="Su Z."/>
            <person name="Tong W."/>
            <person name="Li J."/>
            <person name="Tong Z."/>
            <person name="Li S."/>
            <person name="Ye J."/>
            <person name="Wang L."/>
            <person name="Fang L."/>
            <person name="Lei T."/>
            <person name="Chen C.-S."/>
            <person name="Chen H.-C."/>
            <person name="Xu Z."/>
            <person name="Li H."/>
            <person name="Huang H."/>
            <person name="Zhang F."/>
            <person name="Xu H."/>
            <person name="Li N."/>
            <person name="Zhao C."/>
            <person name="Li S."/>
            <person name="Dong L."/>
            <person name="Huang Y."/>
            <person name="Li L."/>
            <person name="Xi Y."/>
            <person name="Qi Q."/>
            <person name="Li W."/>
            <person name="Zhang B."/>
            <person name="Hu W."/>
            <person name="Zhang Y."/>
            <person name="Tian X."/>
            <person name="Jiao Y."/>
            <person name="Liang X."/>
            <person name="Jin J."/>
            <person name="Gao L."/>
            <person name="Zheng W."/>
            <person name="Hao B."/>
            <person name="Liu S.-M."/>
            <person name="Wang W."/>
            <person name="Yuan L."/>
            <person name="Cao M."/>
            <person name="McDermott J."/>
            <person name="Samudrala R."/>
            <person name="Wang J."/>
            <person name="Wong G.K.-S."/>
            <person name="Yang H."/>
        </authorList>
    </citation>
    <scope>NUCLEOTIDE SEQUENCE [LARGE SCALE GENOMIC DNA]</scope>
    <source>
        <strain>cv. Nipponbare</strain>
    </source>
</reference>
<reference key="7">
    <citation type="submission" date="2006-10" db="EMBL/GenBank/DDBJ databases">
        <title>Oryza sativa full length cDNA.</title>
        <authorList>
            <consortium name="The rice full-length cDNA consortium"/>
        </authorList>
    </citation>
    <scope>NUCLEOTIDE SEQUENCE [LARGE SCALE MRNA]</scope>
    <source>
        <strain>cv. Nipponbare</strain>
    </source>
</reference>
<reference key="8">
    <citation type="journal article" date="2007" name="Theor. Appl. Genet.">
        <title>Evaluation of genes from eIF4E and eIF4G multigenic families as potential candidates for partial resistance QTLs to Rice yellow mottle virus in rice.</title>
        <authorList>
            <person name="Boisnard A."/>
            <person name="Albar L."/>
            <person name="Thiemele D."/>
            <person name="Rondeau M."/>
            <person name="Ghesquiere A."/>
        </authorList>
    </citation>
    <scope>GENE FAMILY</scope>
</reference>
<comment type="function">
    <text>Recognizes and binds the 7-methylguanosine-containing mRNA cap during an early step in the initiation of protein synthesis and facilitates ribosome binding by inducing the unwinding of the mRNAs secondary structures.</text>
</comment>
<comment type="subunit">
    <text>EIF4F is a multi-subunit complex, the composition of which varies with external and internal environmental conditions. It is composed of at least EIF4A, EIF4E and EIF4G. EIF4E is also known to interact with other partners. In higher plants two isoforms of EIF4F have been identified, named isoform EIF4F and isoform EIF(iso)4F. Isoform EIF4F has subunits p220 and p26, whereas isoform EIF(iso)4F has subunits p82 and p28.</text>
</comment>
<comment type="PTM">
    <text evidence="1">According to the redox status, the Cys-103-Cys-142 disulfide bridge may have a role in regulating protein function by affecting its ability to bind capped mRNA.</text>
</comment>
<comment type="similarity">
    <text evidence="2">Belongs to the eukaryotic initiation factor 4E family.</text>
</comment>
<sequence length="206" mass="23199">MAEVEAAPIAAAETPEVAAAEGAAAAKAPHKLHRQWAFWYDIQSKPKPGAAWGTSLRKAYTFDTVEEFWGLYDQIFRPSKVTVNADFHLFKAGVEPKWEDPECANGGKWTVPCSRKTTLENMWLETLMALIGEQFDESEEICGVVASVRQRGDKLALWTRTASNEAVQVNIGKKWKEIVDYNDKMVYSFHDDAKREKPSRGGRYNV</sequence>
<organism>
    <name type="scientific">Oryza sativa subsp. japonica</name>
    <name type="common">Rice</name>
    <dbReference type="NCBI Taxonomy" id="39947"/>
    <lineage>
        <taxon>Eukaryota</taxon>
        <taxon>Viridiplantae</taxon>
        <taxon>Streptophyta</taxon>
        <taxon>Embryophyta</taxon>
        <taxon>Tracheophyta</taxon>
        <taxon>Spermatophyta</taxon>
        <taxon>Magnoliopsida</taxon>
        <taxon>Liliopsida</taxon>
        <taxon>Poales</taxon>
        <taxon>Poaceae</taxon>
        <taxon>BOP clade</taxon>
        <taxon>Oryzoideae</taxon>
        <taxon>Oryzeae</taxon>
        <taxon>Oryzinae</taxon>
        <taxon>Oryza</taxon>
        <taxon>Oryza sativa</taxon>
    </lineage>
</organism>
<accession>P48600</accession>
<accession>B7F9L1</accession>
<accession>Q0IX41</accession>
<accession>Q7XDL0</accession>
<accession>Q9AV72</accession>
<protein>
    <recommendedName>
        <fullName>Eukaryotic translation initiation factor isoform 4E-2</fullName>
        <shortName>eIF(iso)-4E-2</shortName>
        <shortName>eIF(iso)4E-2</shortName>
    </recommendedName>
    <alternativeName>
        <fullName>eIF-(iso)4F 25 kDa subunit</fullName>
    </alternativeName>
    <alternativeName>
        <fullName>eIF-(iso)4F p28 subunit</fullName>
    </alternativeName>
    <alternativeName>
        <fullName>mRNA cap-binding protein</fullName>
    </alternativeName>
</protein>
<evidence type="ECO:0000250" key="1"/>
<evidence type="ECO:0000305" key="2"/>
<evidence type="ECO:0000312" key="3">
    <source>
        <dbReference type="EMBL" id="EEE51107.1"/>
    </source>
</evidence>